<keyword id="KW-0963">Cytoplasm</keyword>
<keyword id="KW-0648">Protein biosynthesis</keyword>
<keyword id="KW-1185">Reference proteome</keyword>
<organism>
    <name type="scientific">Mycoplasma genitalium (strain ATCC 33530 / DSM 19775 / NCTC 10195 / G37)</name>
    <name type="common">Mycoplasmoides genitalium</name>
    <dbReference type="NCBI Taxonomy" id="243273"/>
    <lineage>
        <taxon>Bacteria</taxon>
        <taxon>Bacillati</taxon>
        <taxon>Mycoplasmatota</taxon>
        <taxon>Mycoplasmoidales</taxon>
        <taxon>Mycoplasmoidaceae</taxon>
        <taxon>Mycoplasmoides</taxon>
    </lineage>
</organism>
<proteinExistence type="inferred from homology"/>
<evidence type="ECO:0000255" key="1">
    <source>
        <dbReference type="HAMAP-Rule" id="MF_00040"/>
    </source>
</evidence>
<feature type="chain" id="PRO_0000167492" description="Ribosome-recycling factor">
    <location>
        <begin position="1"/>
        <end position="183"/>
    </location>
</feature>
<dbReference type="EMBL" id="L43967">
    <property type="protein sequence ID" value="AAC72456.1"/>
    <property type="molecule type" value="Genomic_DNA"/>
</dbReference>
<dbReference type="PIR" id="A64248">
    <property type="entry name" value="A64248"/>
</dbReference>
<dbReference type="RefSeq" id="WP_010869481.1">
    <property type="nucleotide sequence ID" value="NC_000908.2"/>
</dbReference>
<dbReference type="SMR" id="P47673"/>
<dbReference type="FunCoup" id="P47673">
    <property type="interactions" value="221"/>
</dbReference>
<dbReference type="STRING" id="243273.MG_435"/>
<dbReference type="GeneID" id="88282616"/>
<dbReference type="KEGG" id="mge:MG_435"/>
<dbReference type="eggNOG" id="COG0233">
    <property type="taxonomic scope" value="Bacteria"/>
</dbReference>
<dbReference type="HOGENOM" id="CLU_073981_2_0_14"/>
<dbReference type="InParanoid" id="P47673"/>
<dbReference type="OrthoDB" id="9804006at2"/>
<dbReference type="BioCyc" id="MGEN243273:G1GJ2-529-MONOMER"/>
<dbReference type="Proteomes" id="UP000000807">
    <property type="component" value="Chromosome"/>
</dbReference>
<dbReference type="GO" id="GO:0005737">
    <property type="term" value="C:cytoplasm"/>
    <property type="evidence" value="ECO:0007669"/>
    <property type="project" value="UniProtKB-SubCell"/>
</dbReference>
<dbReference type="GO" id="GO:0043023">
    <property type="term" value="F:ribosomal large subunit binding"/>
    <property type="evidence" value="ECO:0000318"/>
    <property type="project" value="GO_Central"/>
</dbReference>
<dbReference type="GO" id="GO:0006412">
    <property type="term" value="P:translation"/>
    <property type="evidence" value="ECO:0000318"/>
    <property type="project" value="GO_Central"/>
</dbReference>
<dbReference type="GO" id="GO:0006415">
    <property type="term" value="P:translational termination"/>
    <property type="evidence" value="ECO:0007669"/>
    <property type="project" value="UniProtKB-UniRule"/>
</dbReference>
<dbReference type="CDD" id="cd00520">
    <property type="entry name" value="RRF"/>
    <property type="match status" value="1"/>
</dbReference>
<dbReference type="FunFam" id="3.30.1360.40:FF:000001">
    <property type="entry name" value="Ribosome-recycling factor"/>
    <property type="match status" value="1"/>
</dbReference>
<dbReference type="Gene3D" id="3.30.1360.40">
    <property type="match status" value="1"/>
</dbReference>
<dbReference type="Gene3D" id="1.10.132.20">
    <property type="entry name" value="Ribosome-recycling factor"/>
    <property type="match status" value="1"/>
</dbReference>
<dbReference type="HAMAP" id="MF_00040">
    <property type="entry name" value="RRF"/>
    <property type="match status" value="1"/>
</dbReference>
<dbReference type="InterPro" id="IPR002661">
    <property type="entry name" value="Ribosome_recyc_fac"/>
</dbReference>
<dbReference type="InterPro" id="IPR023584">
    <property type="entry name" value="Ribosome_recyc_fac_dom"/>
</dbReference>
<dbReference type="InterPro" id="IPR036191">
    <property type="entry name" value="RRF_sf"/>
</dbReference>
<dbReference type="NCBIfam" id="TIGR00496">
    <property type="entry name" value="frr"/>
    <property type="match status" value="1"/>
</dbReference>
<dbReference type="PANTHER" id="PTHR20982:SF3">
    <property type="entry name" value="MITOCHONDRIAL RIBOSOME RECYCLING FACTOR PSEUDO 1"/>
    <property type="match status" value="1"/>
</dbReference>
<dbReference type="PANTHER" id="PTHR20982">
    <property type="entry name" value="RIBOSOME RECYCLING FACTOR"/>
    <property type="match status" value="1"/>
</dbReference>
<dbReference type="Pfam" id="PF01765">
    <property type="entry name" value="RRF"/>
    <property type="match status" value="1"/>
</dbReference>
<dbReference type="SUPFAM" id="SSF55194">
    <property type="entry name" value="Ribosome recycling factor, RRF"/>
    <property type="match status" value="1"/>
</dbReference>
<accession>P47673</accession>
<gene>
    <name evidence="1" type="primary">frr</name>
    <name type="ordered locus">MG435</name>
</gene>
<comment type="function">
    <text evidence="1">Responsible for the release of ribosomes from messenger RNA at the termination of protein biosynthesis. May increase the efficiency of translation by recycling ribosomes from one round of translation to another.</text>
</comment>
<comment type="subcellular location">
    <subcellularLocation>
        <location evidence="1">Cytoplasm</location>
    </subcellularLocation>
</comment>
<comment type="similarity">
    <text evidence="1">Belongs to the RRF family.</text>
</comment>
<sequence>MTKAHYIDFFKQAADKKIQWLKEELTKIRTGRPNPKIFDNLLIESYGQKMPLISLAQVTINPPREIIIKPFDPKSNTNAIYSEIQRANIGVQPVIDGEKIRVNFPQITQETRLENIKHVKKIIEQIYQELRVVRRDALQMIKKDNHNEDLENSLKAEIEKINKNYSNQLEEIQKDKEKELLTI</sequence>
<name>RRF_MYCGE</name>
<reference key="1">
    <citation type="journal article" date="1995" name="Science">
        <title>The minimal gene complement of Mycoplasma genitalium.</title>
        <authorList>
            <person name="Fraser C.M."/>
            <person name="Gocayne J.D."/>
            <person name="White O."/>
            <person name="Adams M.D."/>
            <person name="Clayton R.A."/>
            <person name="Fleischmann R.D."/>
            <person name="Bult C.J."/>
            <person name="Kerlavage A.R."/>
            <person name="Sutton G.G."/>
            <person name="Kelley J.M."/>
            <person name="Fritchman J.L."/>
            <person name="Weidman J.F."/>
            <person name="Small K.V."/>
            <person name="Sandusky M."/>
            <person name="Fuhrmann J.L."/>
            <person name="Nguyen D.T."/>
            <person name="Utterback T.R."/>
            <person name="Saudek D.M."/>
            <person name="Phillips C.A."/>
            <person name="Merrick J.M."/>
            <person name="Tomb J.-F."/>
            <person name="Dougherty B.A."/>
            <person name="Bott K.F."/>
            <person name="Hu P.-C."/>
            <person name="Lucier T.S."/>
            <person name="Peterson S.N."/>
            <person name="Smith H.O."/>
            <person name="Hutchison C.A. III"/>
            <person name="Venter J.C."/>
        </authorList>
    </citation>
    <scope>NUCLEOTIDE SEQUENCE [LARGE SCALE GENOMIC DNA]</scope>
    <source>
        <strain>ATCC 33530 / DSM 19775 / NCTC 10195 / G37</strain>
    </source>
</reference>
<protein>
    <recommendedName>
        <fullName evidence="1">Ribosome-recycling factor</fullName>
        <shortName evidence="1">RRF</shortName>
    </recommendedName>
    <alternativeName>
        <fullName evidence="1">Ribosome-releasing factor</fullName>
    </alternativeName>
</protein>